<feature type="chain" id="PRO_0000242131" description="Arginine--tRNA ligase">
    <location>
        <begin position="1"/>
        <end position="560"/>
    </location>
</feature>
<feature type="short sequence motif" description="'HIGH' region">
    <location>
        <begin position="122"/>
        <end position="132"/>
    </location>
</feature>
<name>SYR_METST</name>
<proteinExistence type="inferred from homology"/>
<sequence length="560" mass="64597">MYSKLKTEINESIKEALTKLRIKYDDEIILEEPPNPSMGDMSTNIAFSLASKLKKSPVEIAQEIKENIKLPLYFEKVETKGPYINFYINYTLFTTKVVNYIDKNYGELPEKDERILLEHTSANPNGPLHVGHLRNAILGDSLKRILQHAGYKVEAQYYVNDMGRQIAIIVWGMDKFNYTVDDDKKADHAIGEVYYKCNQQLEANPEYNQEIDDILRKYEEGTDAALIDAFQGVVEYCIDGIKETLKDLNIKMNLFKWESTFLRNGSVDDVLEKLQPFTIQKDILYLPLERYNVDKELVLRRSNGTSLYATRDLAYHQYKTKNSDISLDILGADHKLAAKQLGLALELSNNRAPEVVFYEFIDLPEGSMSTRKGVFISVDEFIEQSVEHAKEELIRRDLDLTEKQIEEVSKIVGVGSIRFYINQISPEKPITFKWEEALSFERGCASIQYAHARACKLLAKSDYNEFEEVRCDYELDDEEKDLIKTLSQFTEVICQSAQERRVHHLAQYTLSLSKAFNKFYKSKQVIGSEHEKLRLKLVDASRITLKNSLKLLGIKSPEFM</sequence>
<organism>
    <name type="scientific">Methanosphaera stadtmanae (strain ATCC 43021 / DSM 3091 / JCM 11832 / MCB-3)</name>
    <dbReference type="NCBI Taxonomy" id="339860"/>
    <lineage>
        <taxon>Archaea</taxon>
        <taxon>Methanobacteriati</taxon>
        <taxon>Methanobacteriota</taxon>
        <taxon>Methanomada group</taxon>
        <taxon>Methanobacteria</taxon>
        <taxon>Methanobacteriales</taxon>
        <taxon>Methanobacteriaceae</taxon>
        <taxon>Methanosphaera</taxon>
    </lineage>
</organism>
<gene>
    <name evidence="1" type="primary">argS</name>
    <name type="ordered locus">Msp_1574</name>
</gene>
<protein>
    <recommendedName>
        <fullName evidence="1">Arginine--tRNA ligase</fullName>
        <ecNumber evidence="1">6.1.1.19</ecNumber>
    </recommendedName>
    <alternativeName>
        <fullName evidence="1">Arginyl-tRNA synthetase</fullName>
        <shortName evidence="1">ArgRS</shortName>
    </alternativeName>
</protein>
<reference key="1">
    <citation type="journal article" date="2006" name="J. Bacteriol.">
        <title>The genome sequence of Methanosphaera stadtmanae reveals why this human intestinal archaeon is restricted to methanol and H2 for methane formation and ATP synthesis.</title>
        <authorList>
            <person name="Fricke W.F."/>
            <person name="Seedorf H."/>
            <person name="Henne A."/>
            <person name="Kruer M."/>
            <person name="Liesegang H."/>
            <person name="Hedderich R."/>
            <person name="Gottschalk G."/>
            <person name="Thauer R.K."/>
        </authorList>
    </citation>
    <scope>NUCLEOTIDE SEQUENCE [LARGE SCALE GENOMIC DNA]</scope>
    <source>
        <strain>ATCC 43021 / DSM 3091 / JCM 11832 / MCB-3</strain>
    </source>
</reference>
<keyword id="KW-0030">Aminoacyl-tRNA synthetase</keyword>
<keyword id="KW-0067">ATP-binding</keyword>
<keyword id="KW-0963">Cytoplasm</keyword>
<keyword id="KW-0436">Ligase</keyword>
<keyword id="KW-0547">Nucleotide-binding</keyword>
<keyword id="KW-0648">Protein biosynthesis</keyword>
<keyword id="KW-1185">Reference proteome</keyword>
<accession>Q2NE12</accession>
<dbReference type="EC" id="6.1.1.19" evidence="1"/>
<dbReference type="EMBL" id="CP000102">
    <property type="protein sequence ID" value="ABC57941.1"/>
    <property type="molecule type" value="Genomic_DNA"/>
</dbReference>
<dbReference type="RefSeq" id="WP_011407140.1">
    <property type="nucleotide sequence ID" value="NC_007681.1"/>
</dbReference>
<dbReference type="SMR" id="Q2NE12"/>
<dbReference type="STRING" id="339860.Msp_1574"/>
<dbReference type="GeneID" id="41326151"/>
<dbReference type="KEGG" id="mst:Msp_1574"/>
<dbReference type="eggNOG" id="arCOG00487">
    <property type="taxonomic scope" value="Archaea"/>
</dbReference>
<dbReference type="HOGENOM" id="CLU_006406_6_1_2"/>
<dbReference type="OrthoDB" id="372102at2157"/>
<dbReference type="Proteomes" id="UP000001931">
    <property type="component" value="Chromosome"/>
</dbReference>
<dbReference type="GO" id="GO:0005737">
    <property type="term" value="C:cytoplasm"/>
    <property type="evidence" value="ECO:0007669"/>
    <property type="project" value="UniProtKB-SubCell"/>
</dbReference>
<dbReference type="GO" id="GO:0004814">
    <property type="term" value="F:arginine-tRNA ligase activity"/>
    <property type="evidence" value="ECO:0007669"/>
    <property type="project" value="UniProtKB-UniRule"/>
</dbReference>
<dbReference type="GO" id="GO:0005524">
    <property type="term" value="F:ATP binding"/>
    <property type="evidence" value="ECO:0007669"/>
    <property type="project" value="UniProtKB-UniRule"/>
</dbReference>
<dbReference type="GO" id="GO:0006420">
    <property type="term" value="P:arginyl-tRNA aminoacylation"/>
    <property type="evidence" value="ECO:0007669"/>
    <property type="project" value="UniProtKB-UniRule"/>
</dbReference>
<dbReference type="CDD" id="cd00671">
    <property type="entry name" value="ArgRS_core"/>
    <property type="match status" value="1"/>
</dbReference>
<dbReference type="Gene3D" id="3.30.1360.70">
    <property type="entry name" value="Arginyl tRNA synthetase N-terminal domain"/>
    <property type="match status" value="1"/>
</dbReference>
<dbReference type="Gene3D" id="3.40.50.620">
    <property type="entry name" value="HUPs"/>
    <property type="match status" value="1"/>
</dbReference>
<dbReference type="Gene3D" id="1.10.730.10">
    <property type="entry name" value="Isoleucyl-tRNA Synthetase, Domain 1"/>
    <property type="match status" value="1"/>
</dbReference>
<dbReference type="HAMAP" id="MF_00123">
    <property type="entry name" value="Arg_tRNA_synth"/>
    <property type="match status" value="1"/>
</dbReference>
<dbReference type="InterPro" id="IPR001412">
    <property type="entry name" value="aa-tRNA-synth_I_CS"/>
</dbReference>
<dbReference type="InterPro" id="IPR001278">
    <property type="entry name" value="Arg-tRNA-ligase"/>
</dbReference>
<dbReference type="InterPro" id="IPR005148">
    <property type="entry name" value="Arg-tRNA-synth_N"/>
</dbReference>
<dbReference type="InterPro" id="IPR036695">
    <property type="entry name" value="Arg-tRNA-synth_N_sf"/>
</dbReference>
<dbReference type="InterPro" id="IPR035684">
    <property type="entry name" value="ArgRS_core"/>
</dbReference>
<dbReference type="InterPro" id="IPR008909">
    <property type="entry name" value="DALR_anticod-bd"/>
</dbReference>
<dbReference type="InterPro" id="IPR014729">
    <property type="entry name" value="Rossmann-like_a/b/a_fold"/>
</dbReference>
<dbReference type="InterPro" id="IPR009080">
    <property type="entry name" value="tRNAsynth_Ia_anticodon-bd"/>
</dbReference>
<dbReference type="NCBIfam" id="TIGR00456">
    <property type="entry name" value="argS"/>
    <property type="match status" value="1"/>
</dbReference>
<dbReference type="PANTHER" id="PTHR11956:SF5">
    <property type="entry name" value="ARGININE--TRNA LIGASE, CYTOPLASMIC"/>
    <property type="match status" value="1"/>
</dbReference>
<dbReference type="PANTHER" id="PTHR11956">
    <property type="entry name" value="ARGINYL-TRNA SYNTHETASE"/>
    <property type="match status" value="1"/>
</dbReference>
<dbReference type="Pfam" id="PF03485">
    <property type="entry name" value="Arg_tRNA_synt_N"/>
    <property type="match status" value="1"/>
</dbReference>
<dbReference type="Pfam" id="PF05746">
    <property type="entry name" value="DALR_1"/>
    <property type="match status" value="1"/>
</dbReference>
<dbReference type="Pfam" id="PF00750">
    <property type="entry name" value="tRNA-synt_1d"/>
    <property type="match status" value="1"/>
</dbReference>
<dbReference type="PRINTS" id="PR01038">
    <property type="entry name" value="TRNASYNTHARG"/>
</dbReference>
<dbReference type="SMART" id="SM01016">
    <property type="entry name" value="Arg_tRNA_synt_N"/>
    <property type="match status" value="1"/>
</dbReference>
<dbReference type="SMART" id="SM00836">
    <property type="entry name" value="DALR_1"/>
    <property type="match status" value="1"/>
</dbReference>
<dbReference type="SUPFAM" id="SSF47323">
    <property type="entry name" value="Anticodon-binding domain of a subclass of class I aminoacyl-tRNA synthetases"/>
    <property type="match status" value="1"/>
</dbReference>
<dbReference type="SUPFAM" id="SSF55190">
    <property type="entry name" value="Arginyl-tRNA synthetase (ArgRS), N-terminal 'additional' domain"/>
    <property type="match status" value="1"/>
</dbReference>
<dbReference type="SUPFAM" id="SSF52374">
    <property type="entry name" value="Nucleotidylyl transferase"/>
    <property type="match status" value="1"/>
</dbReference>
<dbReference type="PROSITE" id="PS00178">
    <property type="entry name" value="AA_TRNA_LIGASE_I"/>
    <property type="match status" value="1"/>
</dbReference>
<comment type="catalytic activity">
    <reaction evidence="1">
        <text>tRNA(Arg) + L-arginine + ATP = L-arginyl-tRNA(Arg) + AMP + diphosphate</text>
        <dbReference type="Rhea" id="RHEA:20301"/>
        <dbReference type="Rhea" id="RHEA-COMP:9658"/>
        <dbReference type="Rhea" id="RHEA-COMP:9673"/>
        <dbReference type="ChEBI" id="CHEBI:30616"/>
        <dbReference type="ChEBI" id="CHEBI:32682"/>
        <dbReference type="ChEBI" id="CHEBI:33019"/>
        <dbReference type="ChEBI" id="CHEBI:78442"/>
        <dbReference type="ChEBI" id="CHEBI:78513"/>
        <dbReference type="ChEBI" id="CHEBI:456215"/>
        <dbReference type="EC" id="6.1.1.19"/>
    </reaction>
</comment>
<comment type="subcellular location">
    <subcellularLocation>
        <location evidence="1">Cytoplasm</location>
    </subcellularLocation>
</comment>
<comment type="similarity">
    <text evidence="1">Belongs to the class-I aminoacyl-tRNA synthetase family.</text>
</comment>
<evidence type="ECO:0000255" key="1">
    <source>
        <dbReference type="HAMAP-Rule" id="MF_00123"/>
    </source>
</evidence>